<name>LEU1_BRADU</name>
<protein>
    <recommendedName>
        <fullName evidence="1">2-isopropylmalate synthase</fullName>
        <ecNumber evidence="1">2.3.3.13</ecNumber>
    </recommendedName>
    <alternativeName>
        <fullName evidence="1">Alpha-IPM synthase</fullName>
    </alternativeName>
    <alternativeName>
        <fullName evidence="1">Alpha-isopropylmalate synthase</fullName>
    </alternativeName>
</protein>
<feature type="chain" id="PRO_0000140333" description="2-isopropylmalate synthase">
    <location>
        <begin position="1"/>
        <end position="520"/>
    </location>
</feature>
<feature type="domain" description="Pyruvate carboxyltransferase" evidence="1">
    <location>
        <begin position="12"/>
        <end position="274"/>
    </location>
</feature>
<feature type="region of interest" description="Regulatory domain" evidence="1">
    <location>
        <begin position="398"/>
        <end position="520"/>
    </location>
</feature>
<feature type="binding site" evidence="1">
    <location>
        <position position="21"/>
    </location>
    <ligand>
        <name>Mn(2+)</name>
        <dbReference type="ChEBI" id="CHEBI:29035"/>
    </ligand>
</feature>
<feature type="binding site" evidence="1">
    <location>
        <position position="209"/>
    </location>
    <ligand>
        <name>Mn(2+)</name>
        <dbReference type="ChEBI" id="CHEBI:29035"/>
    </ligand>
</feature>
<feature type="binding site" evidence="1">
    <location>
        <position position="211"/>
    </location>
    <ligand>
        <name>Mn(2+)</name>
        <dbReference type="ChEBI" id="CHEBI:29035"/>
    </ligand>
</feature>
<feature type="binding site" evidence="1">
    <location>
        <position position="245"/>
    </location>
    <ligand>
        <name>Mn(2+)</name>
        <dbReference type="ChEBI" id="CHEBI:29035"/>
    </ligand>
</feature>
<reference key="1">
    <citation type="journal article" date="2002" name="DNA Res.">
        <title>Complete genomic sequence of nitrogen-fixing symbiotic bacterium Bradyrhizobium japonicum USDA110.</title>
        <authorList>
            <person name="Kaneko T."/>
            <person name="Nakamura Y."/>
            <person name="Sato S."/>
            <person name="Minamisawa K."/>
            <person name="Uchiumi T."/>
            <person name="Sasamoto S."/>
            <person name="Watanabe A."/>
            <person name="Idesawa K."/>
            <person name="Iriguchi M."/>
            <person name="Kawashima K."/>
            <person name="Kohara M."/>
            <person name="Matsumoto M."/>
            <person name="Shimpo S."/>
            <person name="Tsuruoka H."/>
            <person name="Wada T."/>
            <person name="Yamada M."/>
            <person name="Tabata S."/>
        </authorList>
    </citation>
    <scope>NUCLEOTIDE SEQUENCE [LARGE SCALE GENOMIC DNA]</scope>
    <source>
        <strain>JCM 10833 / BCRC 13528 / IAM 13628 / NBRC 14792 / USDA 110</strain>
    </source>
</reference>
<dbReference type="EC" id="2.3.3.13" evidence="1"/>
<dbReference type="EMBL" id="BA000040">
    <property type="protein sequence ID" value="BAC51700.1"/>
    <property type="molecule type" value="Genomic_DNA"/>
</dbReference>
<dbReference type="RefSeq" id="NP_773075.1">
    <property type="nucleotide sequence ID" value="NC_004463.1"/>
</dbReference>
<dbReference type="RefSeq" id="WP_011089175.1">
    <property type="nucleotide sequence ID" value="NC_004463.1"/>
</dbReference>
<dbReference type="SMR" id="Q89GB0"/>
<dbReference type="FunCoup" id="Q89GB0">
    <property type="interactions" value="647"/>
</dbReference>
<dbReference type="STRING" id="224911.AAV28_29735"/>
<dbReference type="EnsemblBacteria" id="BAC51700">
    <property type="protein sequence ID" value="BAC51700"/>
    <property type="gene ID" value="BAC51700"/>
</dbReference>
<dbReference type="GeneID" id="46493411"/>
<dbReference type="KEGG" id="bja:bll6435"/>
<dbReference type="PATRIC" id="fig|224911.44.peg.6420"/>
<dbReference type="eggNOG" id="COG0119">
    <property type="taxonomic scope" value="Bacteria"/>
</dbReference>
<dbReference type="HOGENOM" id="CLU_022158_0_1_5"/>
<dbReference type="InParanoid" id="Q89GB0"/>
<dbReference type="OrthoDB" id="9803573at2"/>
<dbReference type="PhylomeDB" id="Q89GB0"/>
<dbReference type="UniPathway" id="UPA00048">
    <property type="reaction ID" value="UER00070"/>
</dbReference>
<dbReference type="Proteomes" id="UP000002526">
    <property type="component" value="Chromosome"/>
</dbReference>
<dbReference type="GO" id="GO:0005829">
    <property type="term" value="C:cytosol"/>
    <property type="evidence" value="ECO:0000318"/>
    <property type="project" value="GO_Central"/>
</dbReference>
<dbReference type="GO" id="GO:0003852">
    <property type="term" value="F:2-isopropylmalate synthase activity"/>
    <property type="evidence" value="ECO:0000318"/>
    <property type="project" value="GO_Central"/>
</dbReference>
<dbReference type="GO" id="GO:0003985">
    <property type="term" value="F:acetyl-CoA C-acetyltransferase activity"/>
    <property type="evidence" value="ECO:0007669"/>
    <property type="project" value="UniProtKB-UniRule"/>
</dbReference>
<dbReference type="GO" id="GO:0030145">
    <property type="term" value="F:manganese ion binding"/>
    <property type="evidence" value="ECO:0007669"/>
    <property type="project" value="UniProtKB-UniRule"/>
</dbReference>
<dbReference type="GO" id="GO:0009098">
    <property type="term" value="P:L-leucine biosynthetic process"/>
    <property type="evidence" value="ECO:0000318"/>
    <property type="project" value="GO_Central"/>
</dbReference>
<dbReference type="CDD" id="cd07940">
    <property type="entry name" value="DRE_TIM_IPMS"/>
    <property type="match status" value="1"/>
</dbReference>
<dbReference type="FunFam" id="1.10.238.260:FF:000001">
    <property type="entry name" value="2-isopropylmalate synthase"/>
    <property type="match status" value="1"/>
</dbReference>
<dbReference type="FunFam" id="3.20.20.70:FF:000010">
    <property type="entry name" value="2-isopropylmalate synthase"/>
    <property type="match status" value="1"/>
</dbReference>
<dbReference type="FunFam" id="3.30.160.270:FF:000003">
    <property type="entry name" value="2-isopropylmalate synthase"/>
    <property type="match status" value="1"/>
</dbReference>
<dbReference type="Gene3D" id="1.10.238.260">
    <property type="match status" value="1"/>
</dbReference>
<dbReference type="Gene3D" id="3.30.160.270">
    <property type="match status" value="1"/>
</dbReference>
<dbReference type="Gene3D" id="3.20.20.70">
    <property type="entry name" value="Aldolase class I"/>
    <property type="match status" value="1"/>
</dbReference>
<dbReference type="HAMAP" id="MF_01025">
    <property type="entry name" value="LeuA_type1"/>
    <property type="match status" value="1"/>
</dbReference>
<dbReference type="InterPro" id="IPR050073">
    <property type="entry name" value="2-IPM_HCS-like"/>
</dbReference>
<dbReference type="InterPro" id="IPR013709">
    <property type="entry name" value="2-isopropylmalate_synth_dimer"/>
</dbReference>
<dbReference type="InterPro" id="IPR002034">
    <property type="entry name" value="AIPM/Hcit_synth_CS"/>
</dbReference>
<dbReference type="InterPro" id="IPR013785">
    <property type="entry name" value="Aldolase_TIM"/>
</dbReference>
<dbReference type="InterPro" id="IPR054691">
    <property type="entry name" value="LeuA/HCS_post-cat"/>
</dbReference>
<dbReference type="InterPro" id="IPR036230">
    <property type="entry name" value="LeuA_allosteric_dom_sf"/>
</dbReference>
<dbReference type="InterPro" id="IPR005671">
    <property type="entry name" value="LeuA_bact_synth"/>
</dbReference>
<dbReference type="InterPro" id="IPR000891">
    <property type="entry name" value="PYR_CT"/>
</dbReference>
<dbReference type="NCBIfam" id="TIGR00973">
    <property type="entry name" value="leuA_bact"/>
    <property type="match status" value="1"/>
</dbReference>
<dbReference type="NCBIfam" id="NF002086">
    <property type="entry name" value="PRK00915.1-3"/>
    <property type="match status" value="1"/>
</dbReference>
<dbReference type="NCBIfam" id="NF002087">
    <property type="entry name" value="PRK00915.1-4"/>
    <property type="match status" value="1"/>
</dbReference>
<dbReference type="PANTHER" id="PTHR10277:SF9">
    <property type="entry name" value="2-ISOPROPYLMALATE SYNTHASE 1, CHLOROPLASTIC-RELATED"/>
    <property type="match status" value="1"/>
</dbReference>
<dbReference type="PANTHER" id="PTHR10277">
    <property type="entry name" value="HOMOCITRATE SYNTHASE-RELATED"/>
    <property type="match status" value="1"/>
</dbReference>
<dbReference type="Pfam" id="PF22617">
    <property type="entry name" value="HCS_D2"/>
    <property type="match status" value="1"/>
</dbReference>
<dbReference type="Pfam" id="PF00682">
    <property type="entry name" value="HMGL-like"/>
    <property type="match status" value="1"/>
</dbReference>
<dbReference type="Pfam" id="PF08502">
    <property type="entry name" value="LeuA_dimer"/>
    <property type="match status" value="1"/>
</dbReference>
<dbReference type="SMART" id="SM00917">
    <property type="entry name" value="LeuA_dimer"/>
    <property type="match status" value="1"/>
</dbReference>
<dbReference type="SUPFAM" id="SSF110921">
    <property type="entry name" value="2-isopropylmalate synthase LeuA, allosteric (dimerisation) domain"/>
    <property type="match status" value="1"/>
</dbReference>
<dbReference type="SUPFAM" id="SSF51569">
    <property type="entry name" value="Aldolase"/>
    <property type="match status" value="1"/>
</dbReference>
<dbReference type="PROSITE" id="PS00815">
    <property type="entry name" value="AIPM_HOMOCIT_SYNTH_1"/>
    <property type="match status" value="1"/>
</dbReference>
<dbReference type="PROSITE" id="PS00816">
    <property type="entry name" value="AIPM_HOMOCIT_SYNTH_2"/>
    <property type="match status" value="1"/>
</dbReference>
<dbReference type="PROSITE" id="PS50991">
    <property type="entry name" value="PYR_CT"/>
    <property type="match status" value="1"/>
</dbReference>
<proteinExistence type="inferred from homology"/>
<sequence length="520" mass="56764">MAPVNKSDKDRVIIFDTTLRDGEQCPGATMTFEEKLEVAELLDDMGVDVIEAGFPITSEGDFQAVSEIARRSKNAVIAGLSRAHPADIDRCAEAVKFAKRGRVHTVIATSPLHMRVKLNKTPEQVIETSVAMVARARNQIDDVEWSAEDGTRSEMDYLCRIVEAVIKAGATTVNIPDTVGYTVPEEYTHFMKTLIERVPNSDKAVFSVHCHNDLGMAVANSLAGVVGGARQVECTINGIGERAGNAALEEIVMAINVRNDKFPYWNKIDTTQLTRASKVVSAATSFPVQYNKAIVGRNAFAHESGIHQDGVLKDASTYEIMRPEMVGLKQSSLVLGKHSGRHAFVHKLEEMGYKLGPNQLEDAFTRMKALADRKKDIYDEDIEALVDEEMAASHDRIKLTSLTVIAGTHGPQRATMKLDVDGQIKIEEAEGNGPVDAVFNCIKRLVPHEAKLELYQVHAVTEGTDAQAEVSVRLSHDGRSMTARAADPDTLVASAKAYLGALNKIVMKRQRDTVTTAAAS</sequence>
<gene>
    <name evidence="1" type="primary">leuA</name>
    <name type="ordered locus">bll6435</name>
</gene>
<organism>
    <name type="scientific">Bradyrhizobium diazoefficiens (strain JCM 10833 / BCRC 13528 / IAM 13628 / NBRC 14792 / USDA 110)</name>
    <dbReference type="NCBI Taxonomy" id="224911"/>
    <lineage>
        <taxon>Bacteria</taxon>
        <taxon>Pseudomonadati</taxon>
        <taxon>Pseudomonadota</taxon>
        <taxon>Alphaproteobacteria</taxon>
        <taxon>Hyphomicrobiales</taxon>
        <taxon>Nitrobacteraceae</taxon>
        <taxon>Bradyrhizobium</taxon>
    </lineage>
</organism>
<comment type="function">
    <text evidence="1">Catalyzes the condensation of the acetyl group of acetyl-CoA with 3-methyl-2-oxobutanoate (2-ketoisovalerate) to form 3-carboxy-3-hydroxy-4-methylpentanoate (2-isopropylmalate).</text>
</comment>
<comment type="catalytic activity">
    <reaction evidence="1">
        <text>3-methyl-2-oxobutanoate + acetyl-CoA + H2O = (2S)-2-isopropylmalate + CoA + H(+)</text>
        <dbReference type="Rhea" id="RHEA:21524"/>
        <dbReference type="ChEBI" id="CHEBI:1178"/>
        <dbReference type="ChEBI" id="CHEBI:11851"/>
        <dbReference type="ChEBI" id="CHEBI:15377"/>
        <dbReference type="ChEBI" id="CHEBI:15378"/>
        <dbReference type="ChEBI" id="CHEBI:57287"/>
        <dbReference type="ChEBI" id="CHEBI:57288"/>
        <dbReference type="EC" id="2.3.3.13"/>
    </reaction>
</comment>
<comment type="cofactor">
    <cofactor evidence="1">
        <name>Mn(2+)</name>
        <dbReference type="ChEBI" id="CHEBI:29035"/>
    </cofactor>
</comment>
<comment type="pathway">
    <text evidence="1">Amino-acid biosynthesis; L-leucine biosynthesis; L-leucine from 3-methyl-2-oxobutanoate: step 1/4.</text>
</comment>
<comment type="subunit">
    <text evidence="1">Homodimer.</text>
</comment>
<comment type="subcellular location">
    <subcellularLocation>
        <location evidence="1">Cytoplasm</location>
    </subcellularLocation>
</comment>
<comment type="similarity">
    <text evidence="1">Belongs to the alpha-IPM synthase/homocitrate synthase family. LeuA type 1 subfamily.</text>
</comment>
<evidence type="ECO:0000255" key="1">
    <source>
        <dbReference type="HAMAP-Rule" id="MF_01025"/>
    </source>
</evidence>
<accession>Q89GB0</accession>
<keyword id="KW-0028">Amino-acid biosynthesis</keyword>
<keyword id="KW-0100">Branched-chain amino acid biosynthesis</keyword>
<keyword id="KW-0963">Cytoplasm</keyword>
<keyword id="KW-0432">Leucine biosynthesis</keyword>
<keyword id="KW-0464">Manganese</keyword>
<keyword id="KW-0479">Metal-binding</keyword>
<keyword id="KW-1185">Reference proteome</keyword>
<keyword id="KW-0808">Transferase</keyword>